<dbReference type="EMBL" id="CP001015">
    <property type="protein sequence ID" value="ACF56782.1"/>
    <property type="molecule type" value="Genomic_DNA"/>
</dbReference>
<dbReference type="SMR" id="B5E3I9"/>
<dbReference type="KEGG" id="spx:SPG_0737"/>
<dbReference type="HOGENOM" id="CLU_034079_2_0_9"/>
<dbReference type="GO" id="GO:0005886">
    <property type="term" value="C:plasma membrane"/>
    <property type="evidence" value="ECO:0007669"/>
    <property type="project" value="UniProtKB-SubCell"/>
</dbReference>
<dbReference type="GO" id="GO:0005940">
    <property type="term" value="C:septin ring"/>
    <property type="evidence" value="ECO:0007669"/>
    <property type="project" value="InterPro"/>
</dbReference>
<dbReference type="GO" id="GO:0000917">
    <property type="term" value="P:division septum assembly"/>
    <property type="evidence" value="ECO:0007669"/>
    <property type="project" value="UniProtKB-KW"/>
</dbReference>
<dbReference type="GO" id="GO:0000921">
    <property type="term" value="P:septin ring assembly"/>
    <property type="evidence" value="ECO:0007669"/>
    <property type="project" value="InterPro"/>
</dbReference>
<dbReference type="HAMAP" id="MF_00728">
    <property type="entry name" value="EzrA"/>
    <property type="match status" value="1"/>
</dbReference>
<dbReference type="InterPro" id="IPR010379">
    <property type="entry name" value="EzrA"/>
</dbReference>
<dbReference type="NCBIfam" id="NF003410">
    <property type="entry name" value="PRK04778.1-4"/>
    <property type="match status" value="1"/>
</dbReference>
<dbReference type="Pfam" id="PF06160">
    <property type="entry name" value="EzrA"/>
    <property type="match status" value="1"/>
</dbReference>
<accession>B5E3I9</accession>
<sequence>MSNGQLIYLMVAIAVILVLAYVVAIFLRKRNEGRLEALEERKEELYNLPVNDEVEAVKNMHLIGQSQVAFREWNQKWVDLSLNSFADIENNLFEAEGYNHSFRFLKASHQIDQIESQITLIEEDIAAIRNALADLEKQESKNSGRVLHALDLFEELQHRVAENSEQYGQALDEIEKQLENIQSEFSQFVTLNSSGDPVEAAVILDNTENHILALSHIVDRVPALVTTLSTELPDQLQDLEAGYRKLIDANYHFVETDIEARFHLLYEAFKKNQENIRQLELDNAEYENGQAQEEINALYDIFTREIAAQKVVENLLATLPTYLQHMKENNTLLGEDIARLNKTYLLPETAASHVRRIQTELESFEAAIVEVTSNQEEPTQAYSVLEENLEDLQTQLKDIEDEQISVSERLTQIEKDDINARQKANVYVNRLHTIKRYMEKRNLPGIPQTFLKLFFTASNNTEDLMVELEQKMINIESVTRVLEIATNDMEALETETYNIVQYATLTEQLLQYSNRYRSFDERIQEAFNEALDIFEKEFDYHASFDKISQALEVAEPGVTNRFVTSYEKTRETIRF</sequence>
<proteinExistence type="inferred from homology"/>
<gene>
    <name evidence="1" type="primary">ezrA</name>
    <name type="ordered locus">SPG_0737</name>
</gene>
<keyword id="KW-0131">Cell cycle</keyword>
<keyword id="KW-0132">Cell division</keyword>
<keyword id="KW-1003">Cell membrane</keyword>
<keyword id="KW-0175">Coiled coil</keyword>
<keyword id="KW-0472">Membrane</keyword>
<keyword id="KW-0717">Septation</keyword>
<keyword id="KW-0812">Transmembrane</keyword>
<keyword id="KW-1133">Transmembrane helix</keyword>
<evidence type="ECO:0000255" key="1">
    <source>
        <dbReference type="HAMAP-Rule" id="MF_00728"/>
    </source>
</evidence>
<feature type="chain" id="PRO_1000132708" description="Septation ring formation regulator EzrA">
    <location>
        <begin position="1"/>
        <end position="575"/>
    </location>
</feature>
<feature type="topological domain" description="Extracellular" evidence="1">
    <location>
        <begin position="1"/>
        <end position="8"/>
    </location>
</feature>
<feature type="transmembrane region" description="Helical" evidence="1">
    <location>
        <begin position="9"/>
        <end position="27"/>
    </location>
</feature>
<feature type="topological domain" description="Cytoplasmic" evidence="1">
    <location>
        <begin position="28"/>
        <end position="575"/>
    </location>
</feature>
<feature type="coiled-coil region" evidence="1">
    <location>
        <begin position="105"/>
        <end position="191"/>
    </location>
</feature>
<feature type="coiled-coil region" evidence="1">
    <location>
        <begin position="265"/>
        <end position="301"/>
    </location>
</feature>
<feature type="coiled-coil region" evidence="1">
    <location>
        <begin position="354"/>
        <end position="416"/>
    </location>
</feature>
<feature type="coiled-coil region" evidence="1">
    <location>
        <begin position="456"/>
        <end position="526"/>
    </location>
</feature>
<reference key="1">
    <citation type="journal article" date="2001" name="Microb. Drug Resist.">
        <title>Annotated draft genomic sequence from a Streptococcus pneumoniae type 19F clinical isolate.</title>
        <authorList>
            <person name="Dopazo J."/>
            <person name="Mendoza A."/>
            <person name="Herrero J."/>
            <person name="Caldara F."/>
            <person name="Humbert Y."/>
            <person name="Friedli L."/>
            <person name="Guerrier M."/>
            <person name="Grand-Schenk E."/>
            <person name="Gandin C."/>
            <person name="de Francesco M."/>
            <person name="Polissi A."/>
            <person name="Buell G."/>
            <person name="Feger G."/>
            <person name="Garcia E."/>
            <person name="Peitsch M."/>
            <person name="Garcia-Bustos J.F."/>
        </authorList>
    </citation>
    <scope>NUCLEOTIDE SEQUENCE [LARGE SCALE GENOMIC DNA]</scope>
    <source>
        <strain>G54</strain>
    </source>
</reference>
<reference key="2">
    <citation type="submission" date="2008-03" db="EMBL/GenBank/DDBJ databases">
        <title>Pneumococcal beta glucoside metabolism investigated by whole genome comparison.</title>
        <authorList>
            <person name="Mulas L."/>
            <person name="Trappetti C."/>
            <person name="Hakenbeck R."/>
            <person name="Iannelli F."/>
            <person name="Pozzi G."/>
            <person name="Davidsen T.M."/>
            <person name="Tettelin H."/>
            <person name="Oggioni M."/>
        </authorList>
    </citation>
    <scope>NUCLEOTIDE SEQUENCE [LARGE SCALE GENOMIC DNA]</scope>
    <source>
        <strain>G54</strain>
    </source>
</reference>
<comment type="function">
    <text evidence="1">Negative regulator of FtsZ ring formation; modulates the frequency and position of FtsZ ring formation. Inhibits FtsZ ring formation at polar sites. Interacts either with FtsZ or with one of its binding partners to promote depolymerization.</text>
</comment>
<comment type="subcellular location">
    <subcellularLocation>
        <location evidence="1">Cell membrane</location>
        <topology evidence="1">Single-pass membrane protein</topology>
    </subcellularLocation>
    <text evidence="1">Colocalized with FtsZ to the nascent septal site.</text>
</comment>
<comment type="similarity">
    <text evidence="1">Belongs to the EzrA family.</text>
</comment>
<protein>
    <recommendedName>
        <fullName evidence="1">Septation ring formation regulator EzrA</fullName>
    </recommendedName>
</protein>
<organism>
    <name type="scientific">Streptococcus pneumoniae serotype 19F (strain G54)</name>
    <dbReference type="NCBI Taxonomy" id="512566"/>
    <lineage>
        <taxon>Bacteria</taxon>
        <taxon>Bacillati</taxon>
        <taxon>Bacillota</taxon>
        <taxon>Bacilli</taxon>
        <taxon>Lactobacillales</taxon>
        <taxon>Streptococcaceae</taxon>
        <taxon>Streptococcus</taxon>
    </lineage>
</organism>
<name>EZRA_STRP4</name>